<reference key="1">
    <citation type="journal article" date="2004" name="Nat. Genet.">
        <title>Complete sequencing and characterization of 21,243 full-length human cDNAs.</title>
        <authorList>
            <person name="Ota T."/>
            <person name="Suzuki Y."/>
            <person name="Nishikawa T."/>
            <person name="Otsuki T."/>
            <person name="Sugiyama T."/>
            <person name="Irie R."/>
            <person name="Wakamatsu A."/>
            <person name="Hayashi K."/>
            <person name="Sato H."/>
            <person name="Nagai K."/>
            <person name="Kimura K."/>
            <person name="Makita H."/>
            <person name="Sekine M."/>
            <person name="Obayashi M."/>
            <person name="Nishi T."/>
            <person name="Shibahara T."/>
            <person name="Tanaka T."/>
            <person name="Ishii S."/>
            <person name="Yamamoto J."/>
            <person name="Saito K."/>
            <person name="Kawai Y."/>
            <person name="Isono Y."/>
            <person name="Nakamura Y."/>
            <person name="Nagahari K."/>
            <person name="Murakami K."/>
            <person name="Yasuda T."/>
            <person name="Iwayanagi T."/>
            <person name="Wagatsuma M."/>
            <person name="Shiratori A."/>
            <person name="Sudo H."/>
            <person name="Hosoiri T."/>
            <person name="Kaku Y."/>
            <person name="Kodaira H."/>
            <person name="Kondo H."/>
            <person name="Sugawara M."/>
            <person name="Takahashi M."/>
            <person name="Kanda K."/>
            <person name="Yokoi T."/>
            <person name="Furuya T."/>
            <person name="Kikkawa E."/>
            <person name="Omura Y."/>
            <person name="Abe K."/>
            <person name="Kamihara K."/>
            <person name="Katsuta N."/>
            <person name="Sato K."/>
            <person name="Tanikawa M."/>
            <person name="Yamazaki M."/>
            <person name="Ninomiya K."/>
            <person name="Ishibashi T."/>
            <person name="Yamashita H."/>
            <person name="Murakawa K."/>
            <person name="Fujimori K."/>
            <person name="Tanai H."/>
            <person name="Kimata M."/>
            <person name="Watanabe M."/>
            <person name="Hiraoka S."/>
            <person name="Chiba Y."/>
            <person name="Ishida S."/>
            <person name="Ono Y."/>
            <person name="Takiguchi S."/>
            <person name="Watanabe S."/>
            <person name="Yosida M."/>
            <person name="Hotuta T."/>
            <person name="Kusano J."/>
            <person name="Kanehori K."/>
            <person name="Takahashi-Fujii A."/>
            <person name="Hara H."/>
            <person name="Tanase T.-O."/>
            <person name="Nomura Y."/>
            <person name="Togiya S."/>
            <person name="Komai F."/>
            <person name="Hara R."/>
            <person name="Takeuchi K."/>
            <person name="Arita M."/>
            <person name="Imose N."/>
            <person name="Musashino K."/>
            <person name="Yuuki H."/>
            <person name="Oshima A."/>
            <person name="Sasaki N."/>
            <person name="Aotsuka S."/>
            <person name="Yoshikawa Y."/>
            <person name="Matsunawa H."/>
            <person name="Ichihara T."/>
            <person name="Shiohata N."/>
            <person name="Sano S."/>
            <person name="Moriya S."/>
            <person name="Momiyama H."/>
            <person name="Satoh N."/>
            <person name="Takami S."/>
            <person name="Terashima Y."/>
            <person name="Suzuki O."/>
            <person name="Nakagawa S."/>
            <person name="Senoh A."/>
            <person name="Mizoguchi H."/>
            <person name="Goto Y."/>
            <person name="Shimizu F."/>
            <person name="Wakebe H."/>
            <person name="Hishigaki H."/>
            <person name="Watanabe T."/>
            <person name="Sugiyama A."/>
            <person name="Takemoto M."/>
            <person name="Kawakami B."/>
            <person name="Yamazaki M."/>
            <person name="Watanabe K."/>
            <person name="Kumagai A."/>
            <person name="Itakura S."/>
            <person name="Fukuzumi Y."/>
            <person name="Fujimori Y."/>
            <person name="Komiyama M."/>
            <person name="Tashiro H."/>
            <person name="Tanigami A."/>
            <person name="Fujiwara T."/>
            <person name="Ono T."/>
            <person name="Yamada K."/>
            <person name="Fujii Y."/>
            <person name="Ozaki K."/>
            <person name="Hirao M."/>
            <person name="Ohmori Y."/>
            <person name="Kawabata A."/>
            <person name="Hikiji T."/>
            <person name="Kobatake N."/>
            <person name="Inagaki H."/>
            <person name="Ikema Y."/>
            <person name="Okamoto S."/>
            <person name="Okitani R."/>
            <person name="Kawakami T."/>
            <person name="Noguchi S."/>
            <person name="Itoh T."/>
            <person name="Shigeta K."/>
            <person name="Senba T."/>
            <person name="Matsumura K."/>
            <person name="Nakajima Y."/>
            <person name="Mizuno T."/>
            <person name="Morinaga M."/>
            <person name="Sasaki M."/>
            <person name="Togashi T."/>
            <person name="Oyama M."/>
            <person name="Hata H."/>
            <person name="Watanabe M."/>
            <person name="Komatsu T."/>
            <person name="Mizushima-Sugano J."/>
            <person name="Satoh T."/>
            <person name="Shirai Y."/>
            <person name="Takahashi Y."/>
            <person name="Nakagawa K."/>
            <person name="Okumura K."/>
            <person name="Nagase T."/>
            <person name="Nomura N."/>
            <person name="Kikuchi H."/>
            <person name="Masuho Y."/>
            <person name="Yamashita R."/>
            <person name="Nakai K."/>
            <person name="Yada T."/>
            <person name="Nakamura Y."/>
            <person name="Ohara O."/>
            <person name="Isogai T."/>
            <person name="Sugano S."/>
        </authorList>
    </citation>
    <scope>NUCLEOTIDE SEQUENCE [LARGE SCALE MRNA]</scope>
    <source>
        <tissue>Teratocarcinoma</tissue>
    </source>
</reference>
<reference key="2">
    <citation type="journal article" date="2007" name="BMC Genomics">
        <title>The full-ORF clone resource of the German cDNA consortium.</title>
        <authorList>
            <person name="Bechtel S."/>
            <person name="Rosenfelder H."/>
            <person name="Duda A."/>
            <person name="Schmidt C.P."/>
            <person name="Ernst U."/>
            <person name="Wellenreuther R."/>
            <person name="Mehrle A."/>
            <person name="Schuster C."/>
            <person name="Bahr A."/>
            <person name="Bloecker H."/>
            <person name="Heubner D."/>
            <person name="Hoerlein A."/>
            <person name="Michel G."/>
            <person name="Wedler H."/>
            <person name="Koehrer K."/>
            <person name="Ottenwaelder B."/>
            <person name="Poustka A."/>
            <person name="Wiemann S."/>
            <person name="Schupp I."/>
        </authorList>
    </citation>
    <scope>NUCLEOTIDE SEQUENCE [LARGE SCALE MRNA]</scope>
    <source>
        <tissue>Amygdala</tissue>
    </source>
</reference>
<reference key="3">
    <citation type="journal article" date="2004" name="Genome Res.">
        <title>The status, quality, and expansion of the NIH full-length cDNA project: the Mammalian Gene Collection (MGC).</title>
        <authorList>
            <consortium name="The MGC Project Team"/>
        </authorList>
    </citation>
    <scope>NUCLEOTIDE SEQUENCE [LARGE SCALE MRNA]</scope>
    <source>
        <tissue>Eye</tissue>
    </source>
</reference>
<reference key="4">
    <citation type="journal article" date="2001" name="DNA Res.">
        <title>Prediction of the coding sequences of unidentified human genes. XXII. The complete sequences of 50 new cDNA clones which code for large proteins.</title>
        <authorList>
            <person name="Nagase T."/>
            <person name="Kikuno R."/>
            <person name="Ohara O."/>
        </authorList>
    </citation>
    <scope>NUCLEOTIDE SEQUENCE [LARGE SCALE MRNA] OF 77-532</scope>
    <source>
        <tissue>Brain</tissue>
    </source>
</reference>
<reference key="5">
    <citation type="journal article" date="2017" name="Nat. Struct. Mol. Biol.">
        <title>Site-specific mapping of the human SUMO proteome reveals co-modification with phosphorylation.</title>
        <authorList>
            <person name="Hendriks I.A."/>
            <person name="Lyon D."/>
            <person name="Young C."/>
            <person name="Jensen L.J."/>
            <person name="Vertegaal A.C."/>
            <person name="Nielsen M.L."/>
        </authorList>
    </citation>
    <scope>SUMOYLATION [LARGE SCALE ANALYSIS] AT LYS-126 AND LYS-142</scope>
    <scope>IDENTIFICATION BY MASS SPECTROMETRY [LARGE SCALE ANALYSIS]</scope>
</reference>
<feature type="chain" id="PRO_0000233164" description="Zinc finger protein 82 homolog">
    <location>
        <begin position="1"/>
        <end position="532"/>
    </location>
</feature>
<feature type="domain" description="KRAB" evidence="2">
    <location>
        <begin position="6"/>
        <end position="77"/>
    </location>
</feature>
<feature type="zinc finger region" description="C2H2-type 1" evidence="1">
    <location>
        <begin position="170"/>
        <end position="192"/>
    </location>
</feature>
<feature type="zinc finger region" description="C2H2-type 2" evidence="1">
    <location>
        <begin position="198"/>
        <end position="220"/>
    </location>
</feature>
<feature type="zinc finger region" description="C2H2-type 3" evidence="1">
    <location>
        <begin position="226"/>
        <end position="248"/>
    </location>
</feature>
<feature type="zinc finger region" description="C2H2-type 4" evidence="1">
    <location>
        <begin position="254"/>
        <end position="276"/>
    </location>
</feature>
<feature type="zinc finger region" description="C2H2-type 5; degenerate" evidence="1">
    <location>
        <begin position="282"/>
        <end position="304"/>
    </location>
</feature>
<feature type="zinc finger region" description="C2H2-type 6" evidence="1">
    <location>
        <begin position="310"/>
        <end position="332"/>
    </location>
</feature>
<feature type="zinc finger region" description="C2H2-type 7" evidence="1">
    <location>
        <begin position="338"/>
        <end position="360"/>
    </location>
</feature>
<feature type="zinc finger region" description="C2H2-type 8" evidence="1">
    <location>
        <begin position="366"/>
        <end position="388"/>
    </location>
</feature>
<feature type="zinc finger region" description="C2H2-type 9" evidence="1">
    <location>
        <begin position="394"/>
        <end position="416"/>
    </location>
</feature>
<feature type="zinc finger region" description="C2H2-type 10" evidence="1">
    <location>
        <begin position="422"/>
        <end position="444"/>
    </location>
</feature>
<feature type="zinc finger region" description="C2H2-type 11" evidence="1">
    <location>
        <begin position="450"/>
        <end position="472"/>
    </location>
</feature>
<feature type="zinc finger region" description="C2H2-type 12" evidence="1">
    <location>
        <begin position="478"/>
        <end position="500"/>
    </location>
</feature>
<feature type="zinc finger region" description="C2H2-type 13" evidence="1">
    <location>
        <begin position="506"/>
        <end position="528"/>
    </location>
</feature>
<feature type="cross-link" description="Glycyl lysine isopeptide (Lys-Gly) (interchain with G-Cter in SUMO2)" evidence="4">
    <location>
        <position position="126"/>
    </location>
</feature>
<feature type="cross-link" description="Glycyl lysine isopeptide (Lys-Gly) (interchain with G-Cter in SUMO2)" evidence="4">
    <location>
        <position position="142"/>
    </location>
</feature>
<feature type="sequence conflict" description="In Ref. 1; BAC11308." evidence="3" ref="1">
    <original>E</original>
    <variation>G</variation>
    <location>
        <position position="128"/>
    </location>
</feature>
<feature type="sequence conflict" description="In Ref. 1; BAC11308." evidence="3" ref="1">
    <original>T</original>
    <variation>A</variation>
    <location>
        <position position="158"/>
    </location>
</feature>
<proteinExistence type="evidence at protein level"/>
<keyword id="KW-0238">DNA-binding</keyword>
<keyword id="KW-1017">Isopeptide bond</keyword>
<keyword id="KW-0479">Metal-binding</keyword>
<keyword id="KW-0539">Nucleus</keyword>
<keyword id="KW-1267">Proteomics identification</keyword>
<keyword id="KW-1185">Reference proteome</keyword>
<keyword id="KW-0677">Repeat</keyword>
<keyword id="KW-0804">Transcription</keyword>
<keyword id="KW-0805">Transcription regulation</keyword>
<keyword id="KW-0832">Ubl conjugation</keyword>
<keyword id="KW-0862">Zinc</keyword>
<keyword id="KW-0863">Zinc-finger</keyword>
<accession>Q8N141</accession>
<accession>Q8NC63</accession>
<accession>Q8TF53</accession>
<evidence type="ECO:0000255" key="1">
    <source>
        <dbReference type="PROSITE-ProRule" id="PRU00042"/>
    </source>
</evidence>
<evidence type="ECO:0000255" key="2">
    <source>
        <dbReference type="PROSITE-ProRule" id="PRU00119"/>
    </source>
</evidence>
<evidence type="ECO:0000305" key="3"/>
<evidence type="ECO:0007744" key="4">
    <source>
    </source>
</evidence>
<comment type="function">
    <text>May be involved in transcriptional regulation.</text>
</comment>
<comment type="subcellular location">
    <subcellularLocation>
        <location evidence="3">Nucleus</location>
    </subcellularLocation>
</comment>
<comment type="similarity">
    <text evidence="3">Belongs to the krueppel C2H2-type zinc-finger protein family.</text>
</comment>
<comment type="sequence caution" evidence="3">
    <conflict type="erroneous initiation">
        <sequence resource="EMBL-CDS" id="BAB85534"/>
    </conflict>
    <text>Extended N-terminus.</text>
</comment>
<comment type="sequence caution" evidence="3">
    <conflict type="miscellaneous discrepancy">
        <sequence resource="EMBL-CDS" id="BAB85534"/>
    </conflict>
    <text>Probable cloning artifact.</text>
</comment>
<sequence>MALRSVMFSDVSIDFSPEEWEYLDLEQKDLYRDVMLENYSNLVSLGCFISKPDVISSLEQGKEPWKVVRKGRRQYPDLETKYETKKLSLENDIYEINLSQWKIMERIENHGLKGLILKNDWESTGKIEGQERPQEGYFSSVKMPSEKVSSYQKRTSVTPHQRLHFVDKPYECKECGKAFRVRQQLTFHHRIHTGEKPYECKECGMAFRQTAHLTRHQRLHSGEKLYECKECGEAFICGADLRVHQKMHIGEKPYECKECGKAFRVRGQLTLHQRIHTGEKPYVCKECGKAFRQYAHLTRHQKLNSADRLYECKECGKAFLCGSGLRVHHKLHTGEKPYECKECGKAFRVRQQLTLHQRIHTGEKPYECKECGKTFSRGYHLILHHRIHTGEKPYECKECWKAFSRYSQLISHQSIHIGVKPYDCKECGKAFRLLSQLTQHQSIHIGEKPYKCKECGKAFRLRQKLTLHQSIHTGEKPFECKECRKAFRLNSSLIQHLRIHSGEKPYECKECKKAFRQHSHLTHHLKIHNVKI</sequence>
<name>ZFP82_HUMAN</name>
<protein>
    <recommendedName>
        <fullName>Zinc finger protein 82 homolog</fullName>
        <shortName>Zfp-82</shortName>
    </recommendedName>
    <alternativeName>
        <fullName>Zinc finger protein 545</fullName>
    </alternativeName>
</protein>
<organism>
    <name type="scientific">Homo sapiens</name>
    <name type="common">Human</name>
    <dbReference type="NCBI Taxonomy" id="9606"/>
    <lineage>
        <taxon>Eukaryota</taxon>
        <taxon>Metazoa</taxon>
        <taxon>Chordata</taxon>
        <taxon>Craniata</taxon>
        <taxon>Vertebrata</taxon>
        <taxon>Euteleostomi</taxon>
        <taxon>Mammalia</taxon>
        <taxon>Eutheria</taxon>
        <taxon>Euarchontoglires</taxon>
        <taxon>Primates</taxon>
        <taxon>Haplorrhini</taxon>
        <taxon>Catarrhini</taxon>
        <taxon>Hominidae</taxon>
        <taxon>Homo</taxon>
    </lineage>
</organism>
<dbReference type="EMBL" id="AK074942">
    <property type="protein sequence ID" value="BAC11308.1"/>
    <property type="molecule type" value="mRNA"/>
</dbReference>
<dbReference type="EMBL" id="AL834267">
    <property type="protein sequence ID" value="CAD38942.1"/>
    <property type="molecule type" value="mRNA"/>
</dbReference>
<dbReference type="EMBL" id="BC032577">
    <property type="protein sequence ID" value="AAH32577.1"/>
    <property type="molecule type" value="mRNA"/>
</dbReference>
<dbReference type="EMBL" id="AB075828">
    <property type="protein sequence ID" value="BAB85534.1"/>
    <property type="status" value="ALT_SEQ"/>
    <property type="molecule type" value="mRNA"/>
</dbReference>
<dbReference type="CCDS" id="CCDS12493.1"/>
<dbReference type="RefSeq" id="NP_597723.1">
    <property type="nucleotide sequence ID" value="NM_133466.4"/>
</dbReference>
<dbReference type="SMR" id="Q8N141"/>
<dbReference type="BioGRID" id="129864">
    <property type="interactions" value="15"/>
</dbReference>
<dbReference type="FunCoup" id="Q8N141">
    <property type="interactions" value="79"/>
</dbReference>
<dbReference type="IntAct" id="Q8N141">
    <property type="interactions" value="3"/>
</dbReference>
<dbReference type="STRING" id="9606.ENSP00000431265"/>
<dbReference type="iPTMnet" id="Q8N141"/>
<dbReference type="PhosphoSitePlus" id="Q8N141"/>
<dbReference type="BioMuta" id="ZFP82"/>
<dbReference type="DMDM" id="74762511"/>
<dbReference type="jPOST" id="Q8N141"/>
<dbReference type="MassIVE" id="Q8N141"/>
<dbReference type="PaxDb" id="9606-ENSP00000431265"/>
<dbReference type="PeptideAtlas" id="Q8N141"/>
<dbReference type="ProteomicsDB" id="71549"/>
<dbReference type="Pumba" id="Q8N141"/>
<dbReference type="Antibodypedia" id="16307">
    <property type="antibodies" value="127 antibodies from 20 providers"/>
</dbReference>
<dbReference type="DNASU" id="284406"/>
<dbReference type="Ensembl" id="ENST00000392161.4">
    <property type="protein sequence ID" value="ENSP00000431265.1"/>
    <property type="gene ID" value="ENSG00000181007.9"/>
</dbReference>
<dbReference type="GeneID" id="284406"/>
<dbReference type="KEGG" id="hsa:284406"/>
<dbReference type="MANE-Select" id="ENST00000392161.4">
    <property type="protein sequence ID" value="ENSP00000431265.1"/>
    <property type="RefSeq nucleotide sequence ID" value="NM_133466.4"/>
    <property type="RefSeq protein sequence ID" value="NP_597723.1"/>
</dbReference>
<dbReference type="UCSC" id="uc002ody.2">
    <property type="organism name" value="human"/>
</dbReference>
<dbReference type="AGR" id="HGNC:28682"/>
<dbReference type="CTD" id="284406"/>
<dbReference type="DisGeNET" id="284406"/>
<dbReference type="GeneCards" id="ZFP82"/>
<dbReference type="HGNC" id="HGNC:28682">
    <property type="gene designation" value="ZFP82"/>
</dbReference>
<dbReference type="HPA" id="ENSG00000181007">
    <property type="expression patterns" value="Low tissue specificity"/>
</dbReference>
<dbReference type="neXtProt" id="NX_Q8N141"/>
<dbReference type="OpenTargets" id="ENSG00000181007"/>
<dbReference type="PharmGKB" id="PA162409714"/>
<dbReference type="VEuPathDB" id="HostDB:ENSG00000181007"/>
<dbReference type="eggNOG" id="KOG1721">
    <property type="taxonomic scope" value="Eukaryota"/>
</dbReference>
<dbReference type="GeneTree" id="ENSGT00940000162531"/>
<dbReference type="HOGENOM" id="CLU_002678_44_5_1"/>
<dbReference type="InParanoid" id="Q8N141"/>
<dbReference type="OMA" id="QHQSIHV"/>
<dbReference type="OrthoDB" id="6591996at2759"/>
<dbReference type="PAN-GO" id="Q8N141">
    <property type="GO annotations" value="4 GO annotations based on evolutionary models"/>
</dbReference>
<dbReference type="PhylomeDB" id="Q8N141"/>
<dbReference type="TreeFam" id="TF341817"/>
<dbReference type="PathwayCommons" id="Q8N141"/>
<dbReference type="SignaLink" id="Q8N141"/>
<dbReference type="BioGRID-ORCS" id="284406">
    <property type="hits" value="45 hits in 1145 CRISPR screens"/>
</dbReference>
<dbReference type="GenomeRNAi" id="284406"/>
<dbReference type="Pharos" id="Q8N141">
    <property type="development level" value="Tbio"/>
</dbReference>
<dbReference type="PRO" id="PR:Q8N141"/>
<dbReference type="Proteomes" id="UP000005640">
    <property type="component" value="Chromosome 19"/>
</dbReference>
<dbReference type="RNAct" id="Q8N141">
    <property type="molecule type" value="protein"/>
</dbReference>
<dbReference type="Bgee" id="ENSG00000181007">
    <property type="expression patterns" value="Expressed in secondary oocyte and 180 other cell types or tissues"/>
</dbReference>
<dbReference type="ExpressionAtlas" id="Q8N141">
    <property type="expression patterns" value="baseline and differential"/>
</dbReference>
<dbReference type="GO" id="GO:0005634">
    <property type="term" value="C:nucleus"/>
    <property type="evidence" value="ECO:0000318"/>
    <property type="project" value="GO_Central"/>
</dbReference>
<dbReference type="GO" id="GO:0000981">
    <property type="term" value="F:DNA-binding transcription factor activity, RNA polymerase II-specific"/>
    <property type="evidence" value="ECO:0000318"/>
    <property type="project" value="GO_Central"/>
</dbReference>
<dbReference type="GO" id="GO:0000978">
    <property type="term" value="F:RNA polymerase II cis-regulatory region sequence-specific DNA binding"/>
    <property type="evidence" value="ECO:0000318"/>
    <property type="project" value="GO_Central"/>
</dbReference>
<dbReference type="GO" id="GO:0008270">
    <property type="term" value="F:zinc ion binding"/>
    <property type="evidence" value="ECO:0007669"/>
    <property type="project" value="UniProtKB-KW"/>
</dbReference>
<dbReference type="GO" id="GO:0006357">
    <property type="term" value="P:regulation of transcription by RNA polymerase II"/>
    <property type="evidence" value="ECO:0000318"/>
    <property type="project" value="GO_Central"/>
</dbReference>
<dbReference type="CDD" id="cd07765">
    <property type="entry name" value="KRAB_A-box"/>
    <property type="match status" value="1"/>
</dbReference>
<dbReference type="FunFam" id="3.30.160.60:FF:000020">
    <property type="entry name" value="Zinc finger protein 14 homolog"/>
    <property type="match status" value="4"/>
</dbReference>
<dbReference type="FunFam" id="3.30.160.60:FF:000473">
    <property type="entry name" value="zinc finger protein 14 homolog isoform X1"/>
    <property type="match status" value="1"/>
</dbReference>
<dbReference type="FunFam" id="3.30.160.60:FF:001121">
    <property type="entry name" value="zinc finger protein 3 homolog"/>
    <property type="match status" value="1"/>
</dbReference>
<dbReference type="FunFam" id="3.30.160.60:FF:000561">
    <property type="entry name" value="Zinc finger protein 30 homolog"/>
    <property type="match status" value="2"/>
</dbReference>
<dbReference type="FunFam" id="3.30.160.60:FF:000434">
    <property type="entry name" value="zinc finger protein 30 homolog"/>
    <property type="match status" value="1"/>
</dbReference>
<dbReference type="FunFam" id="3.30.160.60:FF:002254">
    <property type="entry name" value="Zinc finger protein 540"/>
    <property type="match status" value="1"/>
</dbReference>
<dbReference type="FunFam" id="3.30.160.60:FF:000052">
    <property type="entry name" value="zinc finger protein 546 isoform X1"/>
    <property type="match status" value="1"/>
</dbReference>
<dbReference type="FunFam" id="3.30.160.60:FF:000737">
    <property type="entry name" value="Zinc finger protein 565"/>
    <property type="match status" value="1"/>
</dbReference>
<dbReference type="FunFam" id="3.30.160.60:FF:001270">
    <property type="entry name" value="zinc finger protein 583 isoform X1"/>
    <property type="match status" value="1"/>
</dbReference>
<dbReference type="Gene3D" id="6.10.140.140">
    <property type="match status" value="1"/>
</dbReference>
<dbReference type="Gene3D" id="3.30.160.60">
    <property type="entry name" value="Classic Zinc Finger"/>
    <property type="match status" value="13"/>
</dbReference>
<dbReference type="InterPro" id="IPR001909">
    <property type="entry name" value="KRAB"/>
</dbReference>
<dbReference type="InterPro" id="IPR036051">
    <property type="entry name" value="KRAB_dom_sf"/>
</dbReference>
<dbReference type="InterPro" id="IPR036236">
    <property type="entry name" value="Znf_C2H2_sf"/>
</dbReference>
<dbReference type="InterPro" id="IPR013087">
    <property type="entry name" value="Znf_C2H2_type"/>
</dbReference>
<dbReference type="PANTHER" id="PTHR24399:SF75">
    <property type="entry name" value="ZFP14 ZINC FINGER PROTEIN-RELATED"/>
    <property type="match status" value="1"/>
</dbReference>
<dbReference type="PANTHER" id="PTHR24399">
    <property type="entry name" value="ZINC FINGER AND BTB DOMAIN-CONTAINING"/>
    <property type="match status" value="1"/>
</dbReference>
<dbReference type="Pfam" id="PF01352">
    <property type="entry name" value="KRAB"/>
    <property type="match status" value="1"/>
</dbReference>
<dbReference type="Pfam" id="PF00096">
    <property type="entry name" value="zf-C2H2"/>
    <property type="match status" value="11"/>
</dbReference>
<dbReference type="SMART" id="SM00349">
    <property type="entry name" value="KRAB"/>
    <property type="match status" value="1"/>
</dbReference>
<dbReference type="SMART" id="SM00355">
    <property type="entry name" value="ZnF_C2H2"/>
    <property type="match status" value="13"/>
</dbReference>
<dbReference type="SUPFAM" id="SSF57667">
    <property type="entry name" value="beta-beta-alpha zinc fingers"/>
    <property type="match status" value="7"/>
</dbReference>
<dbReference type="SUPFAM" id="SSF109640">
    <property type="entry name" value="KRAB domain (Kruppel-associated box)"/>
    <property type="match status" value="1"/>
</dbReference>
<dbReference type="PROSITE" id="PS50805">
    <property type="entry name" value="KRAB"/>
    <property type="match status" value="1"/>
</dbReference>
<dbReference type="PROSITE" id="PS00028">
    <property type="entry name" value="ZINC_FINGER_C2H2_1"/>
    <property type="match status" value="12"/>
</dbReference>
<dbReference type="PROSITE" id="PS50157">
    <property type="entry name" value="ZINC_FINGER_C2H2_2"/>
    <property type="match status" value="13"/>
</dbReference>
<gene>
    <name type="primary">ZFP82</name>
    <name type="synonym">KIAA1948</name>
    <name type="synonym">ZNF545</name>
</gene>